<name>RBSD_STAA2</name>
<dbReference type="EC" id="5.4.99.62" evidence="1"/>
<dbReference type="EMBL" id="CP000736">
    <property type="protein sequence ID" value="ABR51122.1"/>
    <property type="molecule type" value="Genomic_DNA"/>
</dbReference>
<dbReference type="SMR" id="A6TY54"/>
<dbReference type="KEGG" id="sah:SaurJH1_0260"/>
<dbReference type="HOGENOM" id="CLU_135498_0_0_9"/>
<dbReference type="UniPathway" id="UPA00916">
    <property type="reaction ID" value="UER00888"/>
</dbReference>
<dbReference type="GO" id="GO:0005829">
    <property type="term" value="C:cytosol"/>
    <property type="evidence" value="ECO:0007669"/>
    <property type="project" value="TreeGrafter"/>
</dbReference>
<dbReference type="GO" id="GO:0062193">
    <property type="term" value="F:D-ribose pyranase activity"/>
    <property type="evidence" value="ECO:0007669"/>
    <property type="project" value="UniProtKB-EC"/>
</dbReference>
<dbReference type="GO" id="GO:0016872">
    <property type="term" value="F:intramolecular lyase activity"/>
    <property type="evidence" value="ECO:0007669"/>
    <property type="project" value="UniProtKB-UniRule"/>
</dbReference>
<dbReference type="GO" id="GO:0048029">
    <property type="term" value="F:monosaccharide binding"/>
    <property type="evidence" value="ECO:0007669"/>
    <property type="project" value="InterPro"/>
</dbReference>
<dbReference type="GO" id="GO:0019303">
    <property type="term" value="P:D-ribose catabolic process"/>
    <property type="evidence" value="ECO:0007669"/>
    <property type="project" value="UniProtKB-UniRule"/>
</dbReference>
<dbReference type="FunFam" id="3.40.1650.10:FF:000004">
    <property type="entry name" value="D-ribose pyranase"/>
    <property type="match status" value="1"/>
</dbReference>
<dbReference type="Gene3D" id="3.40.1650.10">
    <property type="entry name" value="RbsD-like domain"/>
    <property type="match status" value="1"/>
</dbReference>
<dbReference type="HAMAP" id="MF_01661">
    <property type="entry name" value="D_rib_pyranase"/>
    <property type="match status" value="1"/>
</dbReference>
<dbReference type="InterPro" id="IPR023064">
    <property type="entry name" value="D-ribose_pyranase"/>
</dbReference>
<dbReference type="InterPro" id="IPR023750">
    <property type="entry name" value="RbsD-like_sf"/>
</dbReference>
<dbReference type="InterPro" id="IPR007721">
    <property type="entry name" value="RbsD_FucU"/>
</dbReference>
<dbReference type="NCBIfam" id="NF008761">
    <property type="entry name" value="PRK11797.1"/>
    <property type="match status" value="1"/>
</dbReference>
<dbReference type="PANTHER" id="PTHR37831">
    <property type="entry name" value="D-RIBOSE PYRANASE"/>
    <property type="match status" value="1"/>
</dbReference>
<dbReference type="PANTHER" id="PTHR37831:SF1">
    <property type="entry name" value="D-RIBOSE PYRANASE"/>
    <property type="match status" value="1"/>
</dbReference>
<dbReference type="Pfam" id="PF05025">
    <property type="entry name" value="RbsD_FucU"/>
    <property type="match status" value="1"/>
</dbReference>
<dbReference type="SUPFAM" id="SSF102546">
    <property type="entry name" value="RbsD-like"/>
    <property type="match status" value="1"/>
</dbReference>
<feature type="chain" id="PRO_0000346263" description="D-ribose pyranase">
    <location>
        <begin position="1"/>
        <end position="134"/>
    </location>
</feature>
<feature type="active site" description="Proton donor" evidence="1">
    <location>
        <position position="20"/>
    </location>
</feature>
<feature type="binding site" evidence="1">
    <location>
        <position position="28"/>
    </location>
    <ligand>
        <name>substrate</name>
    </ligand>
</feature>
<feature type="binding site" evidence="1">
    <location>
        <position position="99"/>
    </location>
    <ligand>
        <name>substrate</name>
    </ligand>
</feature>
<feature type="binding site" evidence="1">
    <location>
        <begin position="123"/>
        <end position="125"/>
    </location>
    <ligand>
        <name>substrate</name>
    </ligand>
</feature>
<protein>
    <recommendedName>
        <fullName evidence="1">D-ribose pyranase</fullName>
        <ecNumber evidence="1">5.4.99.62</ecNumber>
    </recommendedName>
</protein>
<reference key="1">
    <citation type="submission" date="2007-06" db="EMBL/GenBank/DDBJ databases">
        <title>Complete sequence of chromosome of Staphylococcus aureus subsp. aureus JH1.</title>
        <authorList>
            <consortium name="US DOE Joint Genome Institute"/>
            <person name="Copeland A."/>
            <person name="Lucas S."/>
            <person name="Lapidus A."/>
            <person name="Barry K."/>
            <person name="Detter J.C."/>
            <person name="Glavina del Rio T."/>
            <person name="Hammon N."/>
            <person name="Israni S."/>
            <person name="Dalin E."/>
            <person name="Tice H."/>
            <person name="Pitluck S."/>
            <person name="Chain P."/>
            <person name="Malfatti S."/>
            <person name="Shin M."/>
            <person name="Vergez L."/>
            <person name="Schmutz J."/>
            <person name="Larimer F."/>
            <person name="Land M."/>
            <person name="Hauser L."/>
            <person name="Kyrpides N."/>
            <person name="Ivanova N."/>
            <person name="Tomasz A."/>
            <person name="Richardson P."/>
        </authorList>
    </citation>
    <scope>NUCLEOTIDE SEQUENCE [LARGE SCALE GENOMIC DNA]</scope>
    <source>
        <strain>JH1</strain>
    </source>
</reference>
<organism>
    <name type="scientific">Staphylococcus aureus (strain JH1)</name>
    <dbReference type="NCBI Taxonomy" id="359787"/>
    <lineage>
        <taxon>Bacteria</taxon>
        <taxon>Bacillati</taxon>
        <taxon>Bacillota</taxon>
        <taxon>Bacilli</taxon>
        <taxon>Bacillales</taxon>
        <taxon>Staphylococcaceae</taxon>
        <taxon>Staphylococcus</taxon>
    </lineage>
</organism>
<evidence type="ECO:0000255" key="1">
    <source>
        <dbReference type="HAMAP-Rule" id="MF_01661"/>
    </source>
</evidence>
<keyword id="KW-0119">Carbohydrate metabolism</keyword>
<keyword id="KW-0963">Cytoplasm</keyword>
<keyword id="KW-0413">Isomerase</keyword>
<accession>A6TY54</accession>
<sequence length="134" mass="15165">MKKSAVLNEHISKAIATIGHFDLLTINDAGMPIPNDHRRIDLAVTKNLPRFIDVLATVLEEMEIQKIYLAEEIKEHNPTQLQQIKQLISSEIEIIFIPHEEMKSNLAHPLNKGNIRTGETTPYSNIALESNVTF</sequence>
<comment type="function">
    <text evidence="1">Catalyzes the interconversion of beta-pyran and beta-furan forms of D-ribose.</text>
</comment>
<comment type="catalytic activity">
    <reaction evidence="1">
        <text>beta-D-ribopyranose = beta-D-ribofuranose</text>
        <dbReference type="Rhea" id="RHEA:25432"/>
        <dbReference type="ChEBI" id="CHEBI:27476"/>
        <dbReference type="ChEBI" id="CHEBI:47002"/>
        <dbReference type="EC" id="5.4.99.62"/>
    </reaction>
</comment>
<comment type="pathway">
    <text evidence="1">Carbohydrate metabolism; D-ribose degradation; D-ribose 5-phosphate from beta-D-ribopyranose: step 1/2.</text>
</comment>
<comment type="subunit">
    <text evidence="1">Homodecamer.</text>
</comment>
<comment type="subcellular location">
    <subcellularLocation>
        <location evidence="1">Cytoplasm</location>
    </subcellularLocation>
</comment>
<comment type="similarity">
    <text evidence="1">Belongs to the RbsD / FucU family. RbsD subfamily.</text>
</comment>
<gene>
    <name evidence="1" type="primary">rbsD</name>
    <name type="ordered locus">SaurJH1_0260</name>
</gene>
<proteinExistence type="inferred from homology"/>